<feature type="chain" id="PRO_1000040512" description="6,7-dimethyl-8-ribityllumazine synthase">
    <location>
        <begin position="1"/>
        <end position="158"/>
    </location>
</feature>
<feature type="active site" description="Proton donor" evidence="1">
    <location>
        <position position="89"/>
    </location>
</feature>
<feature type="binding site" evidence="1">
    <location>
        <position position="22"/>
    </location>
    <ligand>
        <name>5-amino-6-(D-ribitylamino)uracil</name>
        <dbReference type="ChEBI" id="CHEBI:15934"/>
    </ligand>
</feature>
<feature type="binding site" evidence="1">
    <location>
        <begin position="57"/>
        <end position="59"/>
    </location>
    <ligand>
        <name>5-amino-6-(D-ribitylamino)uracil</name>
        <dbReference type="ChEBI" id="CHEBI:15934"/>
    </ligand>
</feature>
<feature type="binding site" evidence="1">
    <location>
        <begin position="81"/>
        <end position="83"/>
    </location>
    <ligand>
        <name>5-amino-6-(D-ribitylamino)uracil</name>
        <dbReference type="ChEBI" id="CHEBI:15934"/>
    </ligand>
</feature>
<feature type="binding site" evidence="1">
    <location>
        <begin position="86"/>
        <end position="87"/>
    </location>
    <ligand>
        <name>(2S)-2-hydroxy-3-oxobutyl phosphate</name>
        <dbReference type="ChEBI" id="CHEBI:58830"/>
    </ligand>
</feature>
<feature type="binding site" evidence="1">
    <location>
        <position position="114"/>
    </location>
    <ligand>
        <name>5-amino-6-(D-ribitylamino)uracil</name>
        <dbReference type="ChEBI" id="CHEBI:15934"/>
    </ligand>
</feature>
<feature type="binding site" evidence="1">
    <location>
        <position position="128"/>
    </location>
    <ligand>
        <name>(2S)-2-hydroxy-3-oxobutyl phosphate</name>
        <dbReference type="ChEBI" id="CHEBI:58830"/>
    </ligand>
</feature>
<organism>
    <name type="scientific">Shewanella putrefaciens (strain CN-32 / ATCC BAA-453)</name>
    <dbReference type="NCBI Taxonomy" id="319224"/>
    <lineage>
        <taxon>Bacteria</taxon>
        <taxon>Pseudomonadati</taxon>
        <taxon>Pseudomonadota</taxon>
        <taxon>Gammaproteobacteria</taxon>
        <taxon>Alteromonadales</taxon>
        <taxon>Shewanellaceae</taxon>
        <taxon>Shewanella</taxon>
    </lineage>
</organism>
<accession>A4Y961</accession>
<keyword id="KW-0686">Riboflavin biosynthesis</keyword>
<keyword id="KW-0808">Transferase</keyword>
<comment type="function">
    <text evidence="1">Catalyzes the formation of 6,7-dimethyl-8-ribityllumazine by condensation of 5-amino-6-(D-ribitylamino)uracil with 3,4-dihydroxy-2-butanone 4-phosphate. This is the penultimate step in the biosynthesis of riboflavin.</text>
</comment>
<comment type="catalytic activity">
    <reaction evidence="1">
        <text>(2S)-2-hydroxy-3-oxobutyl phosphate + 5-amino-6-(D-ribitylamino)uracil = 6,7-dimethyl-8-(1-D-ribityl)lumazine + phosphate + 2 H2O + H(+)</text>
        <dbReference type="Rhea" id="RHEA:26152"/>
        <dbReference type="ChEBI" id="CHEBI:15377"/>
        <dbReference type="ChEBI" id="CHEBI:15378"/>
        <dbReference type="ChEBI" id="CHEBI:15934"/>
        <dbReference type="ChEBI" id="CHEBI:43474"/>
        <dbReference type="ChEBI" id="CHEBI:58201"/>
        <dbReference type="ChEBI" id="CHEBI:58830"/>
        <dbReference type="EC" id="2.5.1.78"/>
    </reaction>
</comment>
<comment type="pathway">
    <text evidence="1">Cofactor biosynthesis; riboflavin biosynthesis; riboflavin from 2-hydroxy-3-oxobutyl phosphate and 5-amino-6-(D-ribitylamino)uracil: step 1/2.</text>
</comment>
<comment type="subunit">
    <text evidence="1">Forms an icosahedral capsid composed of 60 subunits, arranged as a dodecamer of pentamers.</text>
</comment>
<comment type="similarity">
    <text evidence="1">Belongs to the DMRL synthase family.</text>
</comment>
<name>RISB_SHEPC</name>
<evidence type="ECO:0000255" key="1">
    <source>
        <dbReference type="HAMAP-Rule" id="MF_00178"/>
    </source>
</evidence>
<dbReference type="EC" id="2.5.1.78" evidence="1"/>
<dbReference type="EMBL" id="CP000681">
    <property type="protein sequence ID" value="ABP76494.1"/>
    <property type="molecule type" value="Genomic_DNA"/>
</dbReference>
<dbReference type="SMR" id="A4Y961"/>
<dbReference type="STRING" id="319224.Sputcn32_2775"/>
<dbReference type="KEGG" id="spc:Sputcn32_2775"/>
<dbReference type="eggNOG" id="COG0054">
    <property type="taxonomic scope" value="Bacteria"/>
</dbReference>
<dbReference type="HOGENOM" id="CLU_089358_1_1_6"/>
<dbReference type="UniPathway" id="UPA00275">
    <property type="reaction ID" value="UER00404"/>
</dbReference>
<dbReference type="GO" id="GO:0005829">
    <property type="term" value="C:cytosol"/>
    <property type="evidence" value="ECO:0007669"/>
    <property type="project" value="TreeGrafter"/>
</dbReference>
<dbReference type="GO" id="GO:0009349">
    <property type="term" value="C:riboflavin synthase complex"/>
    <property type="evidence" value="ECO:0007669"/>
    <property type="project" value="InterPro"/>
</dbReference>
<dbReference type="GO" id="GO:0000906">
    <property type="term" value="F:6,7-dimethyl-8-ribityllumazine synthase activity"/>
    <property type="evidence" value="ECO:0007669"/>
    <property type="project" value="UniProtKB-UniRule"/>
</dbReference>
<dbReference type="GO" id="GO:0009231">
    <property type="term" value="P:riboflavin biosynthetic process"/>
    <property type="evidence" value="ECO:0007669"/>
    <property type="project" value="UniProtKB-UniRule"/>
</dbReference>
<dbReference type="CDD" id="cd09209">
    <property type="entry name" value="Lumazine_synthase-I"/>
    <property type="match status" value="1"/>
</dbReference>
<dbReference type="FunFam" id="3.40.50.960:FF:000001">
    <property type="entry name" value="6,7-dimethyl-8-ribityllumazine synthase"/>
    <property type="match status" value="1"/>
</dbReference>
<dbReference type="Gene3D" id="3.40.50.960">
    <property type="entry name" value="Lumazine/riboflavin synthase"/>
    <property type="match status" value="1"/>
</dbReference>
<dbReference type="HAMAP" id="MF_00178">
    <property type="entry name" value="Lumazine_synth"/>
    <property type="match status" value="1"/>
</dbReference>
<dbReference type="InterPro" id="IPR034964">
    <property type="entry name" value="LS"/>
</dbReference>
<dbReference type="InterPro" id="IPR002180">
    <property type="entry name" value="LS/RS"/>
</dbReference>
<dbReference type="InterPro" id="IPR036467">
    <property type="entry name" value="LS/RS_sf"/>
</dbReference>
<dbReference type="NCBIfam" id="TIGR00114">
    <property type="entry name" value="lumazine-synth"/>
    <property type="match status" value="1"/>
</dbReference>
<dbReference type="NCBIfam" id="NF000812">
    <property type="entry name" value="PRK00061.1-4"/>
    <property type="match status" value="1"/>
</dbReference>
<dbReference type="PANTHER" id="PTHR21058:SF0">
    <property type="entry name" value="6,7-DIMETHYL-8-RIBITYLLUMAZINE SYNTHASE"/>
    <property type="match status" value="1"/>
</dbReference>
<dbReference type="PANTHER" id="PTHR21058">
    <property type="entry name" value="6,7-DIMETHYL-8-RIBITYLLUMAZINE SYNTHASE DMRL SYNTHASE LUMAZINE SYNTHASE"/>
    <property type="match status" value="1"/>
</dbReference>
<dbReference type="Pfam" id="PF00885">
    <property type="entry name" value="DMRL_synthase"/>
    <property type="match status" value="1"/>
</dbReference>
<dbReference type="SUPFAM" id="SSF52121">
    <property type="entry name" value="Lumazine synthase"/>
    <property type="match status" value="1"/>
</dbReference>
<gene>
    <name evidence="1" type="primary">ribH</name>
    <name type="ordered locus">Sputcn32_2775</name>
</gene>
<proteinExistence type="inferred from homology"/>
<protein>
    <recommendedName>
        <fullName evidence="1">6,7-dimethyl-8-ribityllumazine synthase</fullName>
        <shortName evidence="1">DMRL synthase</shortName>
        <shortName evidence="1">LS</shortName>
        <shortName evidence="1">Lumazine synthase</shortName>
        <ecNumber evidence="1">2.5.1.78</ecNumber>
    </recommendedName>
</protein>
<sequence>MNIVQGNIEAKNAKVAIVISRFNSFLVESLLEGALDTLKRFGQVSDDNITVVRVPGAVELPLAARRVAASGKFDGIIALGAVIRGGTPHFDFVAGECNKGLAQVALEFDLPVAFGVLTTDTIEQAIERSGTKAGNKGGEAALSLLEMVNVLQELEQQL</sequence>
<reference key="1">
    <citation type="submission" date="2007-04" db="EMBL/GenBank/DDBJ databases">
        <title>Complete sequence of Shewanella putrefaciens CN-32.</title>
        <authorList>
            <consortium name="US DOE Joint Genome Institute"/>
            <person name="Copeland A."/>
            <person name="Lucas S."/>
            <person name="Lapidus A."/>
            <person name="Barry K."/>
            <person name="Detter J.C."/>
            <person name="Glavina del Rio T."/>
            <person name="Hammon N."/>
            <person name="Israni S."/>
            <person name="Dalin E."/>
            <person name="Tice H."/>
            <person name="Pitluck S."/>
            <person name="Chain P."/>
            <person name="Malfatti S."/>
            <person name="Shin M."/>
            <person name="Vergez L."/>
            <person name="Schmutz J."/>
            <person name="Larimer F."/>
            <person name="Land M."/>
            <person name="Hauser L."/>
            <person name="Kyrpides N."/>
            <person name="Mikhailova N."/>
            <person name="Romine M.F."/>
            <person name="Fredrickson J."/>
            <person name="Tiedje J."/>
            <person name="Richardson P."/>
        </authorList>
    </citation>
    <scope>NUCLEOTIDE SEQUENCE [LARGE SCALE GENOMIC DNA]</scope>
    <source>
        <strain>CN-32 / ATCC BAA-453</strain>
    </source>
</reference>